<comment type="similarity">
    <text evidence="1">Belongs to the UPF0246 family.</text>
</comment>
<organism>
    <name type="scientific">Legionella pneumophila (strain Paris)</name>
    <dbReference type="NCBI Taxonomy" id="297246"/>
    <lineage>
        <taxon>Bacteria</taxon>
        <taxon>Pseudomonadati</taxon>
        <taxon>Pseudomonadota</taxon>
        <taxon>Gammaproteobacteria</taxon>
        <taxon>Legionellales</taxon>
        <taxon>Legionellaceae</taxon>
        <taxon>Legionella</taxon>
    </lineage>
</organism>
<name>Y1320_LEGPA</name>
<reference key="1">
    <citation type="journal article" date="2004" name="Nat. Genet.">
        <title>Evidence in the Legionella pneumophila genome for exploitation of host cell functions and high genome plasticity.</title>
        <authorList>
            <person name="Cazalet C."/>
            <person name="Rusniok C."/>
            <person name="Brueggemann H."/>
            <person name="Zidane N."/>
            <person name="Magnier A."/>
            <person name="Ma L."/>
            <person name="Tichit M."/>
            <person name="Jarraud S."/>
            <person name="Bouchier C."/>
            <person name="Vandenesch F."/>
            <person name="Kunst F."/>
            <person name="Etienne J."/>
            <person name="Glaser P."/>
            <person name="Buchrieser C."/>
        </authorList>
    </citation>
    <scope>NUCLEOTIDE SEQUENCE [LARGE SCALE GENOMIC DNA]</scope>
    <source>
        <strain>Paris</strain>
    </source>
</reference>
<sequence>MLTLLSPAKKLLSISKHYSKETSNPLLLDKALQLVKIMKLKSVEQIADLMDLSRQLAELNYERYQNFDLKNNPMNHSYPALFLFQGDVYQGLNANSWKDEEIEYAQSHLGILSGLYGFLRPLDRIQPYRLEMGVNLENPAGKNLYAFWSKIVTNILNQILAEQSNPVLINLASTEYFKVVDEKKLSYPLVTINFYEQKNSELKMIGILAKKARGMMAKYIMQNRIDSIEQIKEFSESGYLFNKEISSPNSLNFI</sequence>
<gene>
    <name type="ordered locus">lpp1320</name>
</gene>
<evidence type="ECO:0000255" key="1">
    <source>
        <dbReference type="HAMAP-Rule" id="MF_00652"/>
    </source>
</evidence>
<feature type="chain" id="PRO_0000262031" description="UPF0246 protein lpp1320">
    <location>
        <begin position="1"/>
        <end position="254"/>
    </location>
</feature>
<dbReference type="EMBL" id="CR628336">
    <property type="protein sequence ID" value="CAH12471.1"/>
    <property type="molecule type" value="Genomic_DNA"/>
</dbReference>
<dbReference type="RefSeq" id="WP_011213663.1">
    <property type="nucleotide sequence ID" value="NC_006368.1"/>
</dbReference>
<dbReference type="SMR" id="Q5X5K0"/>
<dbReference type="KEGG" id="lpp:lpp1320"/>
<dbReference type="LegioList" id="lpp1320"/>
<dbReference type="HOGENOM" id="CLU_061989_0_0_6"/>
<dbReference type="GO" id="GO:0005829">
    <property type="term" value="C:cytosol"/>
    <property type="evidence" value="ECO:0007669"/>
    <property type="project" value="TreeGrafter"/>
</dbReference>
<dbReference type="GO" id="GO:0033194">
    <property type="term" value="P:response to hydroperoxide"/>
    <property type="evidence" value="ECO:0007669"/>
    <property type="project" value="TreeGrafter"/>
</dbReference>
<dbReference type="HAMAP" id="MF_00652">
    <property type="entry name" value="UPF0246"/>
    <property type="match status" value="1"/>
</dbReference>
<dbReference type="InterPro" id="IPR005583">
    <property type="entry name" value="YaaA"/>
</dbReference>
<dbReference type="NCBIfam" id="NF002542">
    <property type="entry name" value="PRK02101.1-3"/>
    <property type="match status" value="1"/>
</dbReference>
<dbReference type="PANTHER" id="PTHR30283:SF4">
    <property type="entry name" value="PEROXIDE STRESS RESISTANCE PROTEIN YAAA"/>
    <property type="match status" value="1"/>
</dbReference>
<dbReference type="PANTHER" id="PTHR30283">
    <property type="entry name" value="PEROXIDE STRESS RESPONSE PROTEIN YAAA"/>
    <property type="match status" value="1"/>
</dbReference>
<dbReference type="Pfam" id="PF03883">
    <property type="entry name" value="H2O2_YaaD"/>
    <property type="match status" value="1"/>
</dbReference>
<protein>
    <recommendedName>
        <fullName evidence="1">UPF0246 protein lpp1320</fullName>
    </recommendedName>
</protein>
<proteinExistence type="inferred from homology"/>
<accession>Q5X5K0</accession>